<feature type="chain" id="PRO_1000058841" description="Adenylate kinase">
    <location>
        <begin position="1"/>
        <end position="218"/>
    </location>
</feature>
<feature type="region of interest" description="NMP" evidence="1">
    <location>
        <begin position="30"/>
        <end position="59"/>
    </location>
</feature>
<feature type="region of interest" description="LID" evidence="1">
    <location>
        <begin position="122"/>
        <end position="159"/>
    </location>
</feature>
<feature type="binding site" evidence="1">
    <location>
        <begin position="10"/>
        <end position="15"/>
    </location>
    <ligand>
        <name>ATP</name>
        <dbReference type="ChEBI" id="CHEBI:30616"/>
    </ligand>
</feature>
<feature type="binding site" evidence="1">
    <location>
        <position position="31"/>
    </location>
    <ligand>
        <name>AMP</name>
        <dbReference type="ChEBI" id="CHEBI:456215"/>
    </ligand>
</feature>
<feature type="binding site" evidence="1">
    <location>
        <position position="36"/>
    </location>
    <ligand>
        <name>AMP</name>
        <dbReference type="ChEBI" id="CHEBI:456215"/>
    </ligand>
</feature>
<feature type="binding site" evidence="1">
    <location>
        <begin position="57"/>
        <end position="59"/>
    </location>
    <ligand>
        <name>AMP</name>
        <dbReference type="ChEBI" id="CHEBI:456215"/>
    </ligand>
</feature>
<feature type="binding site" evidence="1">
    <location>
        <begin position="85"/>
        <end position="88"/>
    </location>
    <ligand>
        <name>AMP</name>
        <dbReference type="ChEBI" id="CHEBI:456215"/>
    </ligand>
</feature>
<feature type="binding site" evidence="1">
    <location>
        <position position="92"/>
    </location>
    <ligand>
        <name>AMP</name>
        <dbReference type="ChEBI" id="CHEBI:456215"/>
    </ligand>
</feature>
<feature type="binding site" evidence="1">
    <location>
        <position position="123"/>
    </location>
    <ligand>
        <name>ATP</name>
        <dbReference type="ChEBI" id="CHEBI:30616"/>
    </ligand>
</feature>
<feature type="binding site" evidence="1">
    <location>
        <begin position="132"/>
        <end position="133"/>
    </location>
    <ligand>
        <name>ATP</name>
        <dbReference type="ChEBI" id="CHEBI:30616"/>
    </ligand>
</feature>
<feature type="binding site" evidence="1">
    <location>
        <position position="156"/>
    </location>
    <ligand>
        <name>AMP</name>
        <dbReference type="ChEBI" id="CHEBI:456215"/>
    </ligand>
</feature>
<feature type="binding site" evidence="1">
    <location>
        <position position="167"/>
    </location>
    <ligand>
        <name>AMP</name>
        <dbReference type="ChEBI" id="CHEBI:456215"/>
    </ligand>
</feature>
<feature type="binding site" evidence="1">
    <location>
        <position position="203"/>
    </location>
    <ligand>
        <name>ATP</name>
        <dbReference type="ChEBI" id="CHEBI:30616"/>
    </ligand>
</feature>
<protein>
    <recommendedName>
        <fullName evidence="1">Adenylate kinase</fullName>
        <shortName evidence="1">AK</shortName>
        <ecNumber evidence="1">2.7.4.3</ecNumber>
    </recommendedName>
    <alternativeName>
        <fullName evidence="1">ATP-AMP transphosphorylase</fullName>
    </alternativeName>
    <alternativeName>
        <fullName evidence="1">ATP:AMP phosphotransferase</fullName>
    </alternativeName>
    <alternativeName>
        <fullName evidence="1">Adenylate monophosphate kinase</fullName>
    </alternativeName>
</protein>
<evidence type="ECO:0000255" key="1">
    <source>
        <dbReference type="HAMAP-Rule" id="MF_00235"/>
    </source>
</evidence>
<proteinExistence type="inferred from homology"/>
<dbReference type="EC" id="2.7.4.3" evidence="1"/>
<dbReference type="EMBL" id="CU207211">
    <property type="protein sequence ID" value="CAL62615.1"/>
    <property type="molecule type" value="Genomic_DNA"/>
</dbReference>
<dbReference type="SMR" id="A4G7X8"/>
<dbReference type="STRING" id="204773.HEAR2487"/>
<dbReference type="KEGG" id="har:HEAR2487"/>
<dbReference type="eggNOG" id="COG0563">
    <property type="taxonomic scope" value="Bacteria"/>
</dbReference>
<dbReference type="HOGENOM" id="CLU_032354_1_2_4"/>
<dbReference type="OrthoDB" id="9805030at2"/>
<dbReference type="UniPathway" id="UPA00588">
    <property type="reaction ID" value="UER00649"/>
</dbReference>
<dbReference type="Proteomes" id="UP000006697">
    <property type="component" value="Chromosome"/>
</dbReference>
<dbReference type="GO" id="GO:0005737">
    <property type="term" value="C:cytoplasm"/>
    <property type="evidence" value="ECO:0007669"/>
    <property type="project" value="UniProtKB-SubCell"/>
</dbReference>
<dbReference type="GO" id="GO:0004017">
    <property type="term" value="F:adenylate kinase activity"/>
    <property type="evidence" value="ECO:0007669"/>
    <property type="project" value="UniProtKB-UniRule"/>
</dbReference>
<dbReference type="GO" id="GO:0005524">
    <property type="term" value="F:ATP binding"/>
    <property type="evidence" value="ECO:0007669"/>
    <property type="project" value="UniProtKB-UniRule"/>
</dbReference>
<dbReference type="GO" id="GO:0044209">
    <property type="term" value="P:AMP salvage"/>
    <property type="evidence" value="ECO:0007669"/>
    <property type="project" value="UniProtKB-UniRule"/>
</dbReference>
<dbReference type="CDD" id="cd01428">
    <property type="entry name" value="ADK"/>
    <property type="match status" value="1"/>
</dbReference>
<dbReference type="FunFam" id="3.40.50.300:FF:000106">
    <property type="entry name" value="Adenylate kinase mitochondrial"/>
    <property type="match status" value="1"/>
</dbReference>
<dbReference type="Gene3D" id="3.40.50.300">
    <property type="entry name" value="P-loop containing nucleotide triphosphate hydrolases"/>
    <property type="match status" value="1"/>
</dbReference>
<dbReference type="HAMAP" id="MF_00235">
    <property type="entry name" value="Adenylate_kinase_Adk"/>
    <property type="match status" value="1"/>
</dbReference>
<dbReference type="InterPro" id="IPR006259">
    <property type="entry name" value="Adenyl_kin_sub"/>
</dbReference>
<dbReference type="InterPro" id="IPR000850">
    <property type="entry name" value="Adenylat/UMP-CMP_kin"/>
</dbReference>
<dbReference type="InterPro" id="IPR033690">
    <property type="entry name" value="Adenylat_kinase_CS"/>
</dbReference>
<dbReference type="InterPro" id="IPR007862">
    <property type="entry name" value="Adenylate_kinase_lid-dom"/>
</dbReference>
<dbReference type="InterPro" id="IPR027417">
    <property type="entry name" value="P-loop_NTPase"/>
</dbReference>
<dbReference type="NCBIfam" id="TIGR01351">
    <property type="entry name" value="adk"/>
    <property type="match status" value="1"/>
</dbReference>
<dbReference type="NCBIfam" id="NF001379">
    <property type="entry name" value="PRK00279.1-1"/>
    <property type="match status" value="1"/>
</dbReference>
<dbReference type="NCBIfam" id="NF001380">
    <property type="entry name" value="PRK00279.1-2"/>
    <property type="match status" value="1"/>
</dbReference>
<dbReference type="NCBIfam" id="NF001381">
    <property type="entry name" value="PRK00279.1-3"/>
    <property type="match status" value="1"/>
</dbReference>
<dbReference type="PANTHER" id="PTHR23359">
    <property type="entry name" value="NUCLEOTIDE KINASE"/>
    <property type="match status" value="1"/>
</dbReference>
<dbReference type="Pfam" id="PF00406">
    <property type="entry name" value="ADK"/>
    <property type="match status" value="1"/>
</dbReference>
<dbReference type="Pfam" id="PF05191">
    <property type="entry name" value="ADK_lid"/>
    <property type="match status" value="1"/>
</dbReference>
<dbReference type="PRINTS" id="PR00094">
    <property type="entry name" value="ADENYLTKNASE"/>
</dbReference>
<dbReference type="SUPFAM" id="SSF52540">
    <property type="entry name" value="P-loop containing nucleoside triphosphate hydrolases"/>
    <property type="match status" value="1"/>
</dbReference>
<dbReference type="PROSITE" id="PS00113">
    <property type="entry name" value="ADENYLATE_KINASE"/>
    <property type="match status" value="1"/>
</dbReference>
<name>KAD_HERAR</name>
<accession>A4G7X8</accession>
<gene>
    <name evidence="1" type="primary">adk</name>
    <name type="ordered locus">HEAR2487</name>
</gene>
<sequence length="218" mass="23669">MRLILLGAPGAGKGTQAGFIKDKYNIPQISTGDMLRAAVKAGTPLGIAAKKIMDEGGLVSDDIIIGLVKDRLKDGDCANGYLFDGFPRTIPQADAMKDAGVAIDYVLEIDVPDEAIVERMSGRRVHPASGRTYHVKFNPPKVAGRDDVTGEELIQRDDDKEETVKKRLSVYHDQTEVLVGYYNKWAESGQPGAPKYRKIAGVGPVDQIRDNAFKALEG</sequence>
<organism>
    <name type="scientific">Herminiimonas arsenicoxydans</name>
    <dbReference type="NCBI Taxonomy" id="204773"/>
    <lineage>
        <taxon>Bacteria</taxon>
        <taxon>Pseudomonadati</taxon>
        <taxon>Pseudomonadota</taxon>
        <taxon>Betaproteobacteria</taxon>
        <taxon>Burkholderiales</taxon>
        <taxon>Oxalobacteraceae</taxon>
        <taxon>Herminiimonas</taxon>
    </lineage>
</organism>
<reference key="1">
    <citation type="journal article" date="2007" name="PLoS Genet.">
        <title>A tale of two oxidation states: bacterial colonization of arsenic-rich environments.</title>
        <authorList>
            <person name="Muller D."/>
            <person name="Medigue C."/>
            <person name="Koechler S."/>
            <person name="Barbe V."/>
            <person name="Barakat M."/>
            <person name="Talla E."/>
            <person name="Bonnefoy V."/>
            <person name="Krin E."/>
            <person name="Arsene-Ploetze F."/>
            <person name="Carapito C."/>
            <person name="Chandler M."/>
            <person name="Cournoyer B."/>
            <person name="Cruveiller S."/>
            <person name="Dossat C."/>
            <person name="Duval S."/>
            <person name="Heymann M."/>
            <person name="Leize E."/>
            <person name="Lieutaud A."/>
            <person name="Lievremont D."/>
            <person name="Makita Y."/>
            <person name="Mangenot S."/>
            <person name="Nitschke W."/>
            <person name="Ortet P."/>
            <person name="Perdrial N."/>
            <person name="Schoepp B."/>
            <person name="Siguier P."/>
            <person name="Simeonova D.D."/>
            <person name="Rouy Z."/>
            <person name="Segurens B."/>
            <person name="Turlin E."/>
            <person name="Vallenet D."/>
            <person name="van Dorsselaer A."/>
            <person name="Weiss S."/>
            <person name="Weissenbach J."/>
            <person name="Lett M.-C."/>
            <person name="Danchin A."/>
            <person name="Bertin P.N."/>
        </authorList>
    </citation>
    <scope>NUCLEOTIDE SEQUENCE [LARGE SCALE GENOMIC DNA]</scope>
    <source>
        <strain>ULPAs1</strain>
    </source>
</reference>
<keyword id="KW-0067">ATP-binding</keyword>
<keyword id="KW-0963">Cytoplasm</keyword>
<keyword id="KW-0418">Kinase</keyword>
<keyword id="KW-0545">Nucleotide biosynthesis</keyword>
<keyword id="KW-0547">Nucleotide-binding</keyword>
<keyword id="KW-1185">Reference proteome</keyword>
<keyword id="KW-0808">Transferase</keyword>
<comment type="function">
    <text evidence="1">Catalyzes the reversible transfer of the terminal phosphate group between ATP and AMP. Plays an important role in cellular energy homeostasis and in adenine nucleotide metabolism.</text>
</comment>
<comment type="catalytic activity">
    <reaction evidence="1">
        <text>AMP + ATP = 2 ADP</text>
        <dbReference type="Rhea" id="RHEA:12973"/>
        <dbReference type="ChEBI" id="CHEBI:30616"/>
        <dbReference type="ChEBI" id="CHEBI:456215"/>
        <dbReference type="ChEBI" id="CHEBI:456216"/>
        <dbReference type="EC" id="2.7.4.3"/>
    </reaction>
</comment>
<comment type="pathway">
    <text evidence="1">Purine metabolism; AMP biosynthesis via salvage pathway; AMP from ADP: step 1/1.</text>
</comment>
<comment type="subunit">
    <text evidence="1">Monomer.</text>
</comment>
<comment type="subcellular location">
    <subcellularLocation>
        <location evidence="1">Cytoplasm</location>
    </subcellularLocation>
</comment>
<comment type="domain">
    <text evidence="1">Consists of three domains, a large central CORE domain and two small peripheral domains, NMPbind and LID, which undergo movements during catalysis. The LID domain closes over the site of phosphoryl transfer upon ATP binding. Assembling and dissambling the active center during each catalytic cycle provides an effective means to prevent ATP hydrolysis.</text>
</comment>
<comment type="similarity">
    <text evidence="1">Belongs to the adenylate kinase family.</text>
</comment>